<protein>
    <recommendedName>
        <fullName evidence="1">Ribonuclease HIII</fullName>
        <shortName evidence="1">RNase HIII</shortName>
        <ecNumber evidence="1">3.1.26.4</ecNumber>
    </recommendedName>
</protein>
<evidence type="ECO:0000255" key="1">
    <source>
        <dbReference type="HAMAP-Rule" id="MF_00053"/>
    </source>
</evidence>
<evidence type="ECO:0000255" key="2">
    <source>
        <dbReference type="PROSITE-ProRule" id="PRU01319"/>
    </source>
</evidence>
<proteinExistence type="inferred from homology"/>
<feature type="chain" id="PRO_0000411549" description="Ribonuclease HIII">
    <location>
        <begin position="1"/>
        <end position="300"/>
    </location>
</feature>
<feature type="domain" description="RNase H type-2" evidence="2">
    <location>
        <begin position="83"/>
        <end position="300"/>
    </location>
</feature>
<feature type="binding site" evidence="1">
    <location>
        <position position="89"/>
    </location>
    <ligand>
        <name>a divalent metal cation</name>
        <dbReference type="ChEBI" id="CHEBI:60240"/>
    </ligand>
</feature>
<feature type="binding site" evidence="1">
    <location>
        <position position="90"/>
    </location>
    <ligand>
        <name>a divalent metal cation</name>
        <dbReference type="ChEBI" id="CHEBI:60240"/>
    </ligand>
</feature>
<feature type="binding site" evidence="1">
    <location>
        <position position="194"/>
    </location>
    <ligand>
        <name>a divalent metal cation</name>
        <dbReference type="ChEBI" id="CHEBI:60240"/>
    </ligand>
</feature>
<sequence>MNTLVLKIDAILSKHLKKQLAPYTISSQNTYVAFAAKKNGVTVLLYKSGKLVLQGNGANALAQELNLPVAKTVFEASNNSQDIPIIGSDEVGNGSYFGGIAVVASFVDPKDHSFLKKLGVDDSKKLSDKTIQQIAPLLEKQIPHQSLLLSPKKYNELVGKSKPYNAISIKVALHNQAIFLLLQKGIQPKQIVIDAFTSQSNYEKHLKKEKNHFPDPLTFQEKAESHYLAVAVSSIIARNLFLDNLDQLGQDLGYQLPSGAGSASDKVASQLLAAYGMSSLEYSAKLHFANTHKAQALLTK</sequence>
<dbReference type="EC" id="3.1.26.4" evidence="1"/>
<dbReference type="EMBL" id="BA000034">
    <property type="protein sequence ID" value="BAC63371.1"/>
    <property type="molecule type" value="Genomic_DNA"/>
</dbReference>
<dbReference type="RefSeq" id="WP_011054971.1">
    <property type="nucleotide sequence ID" value="NC_004606.1"/>
</dbReference>
<dbReference type="SMR" id="P0DF19"/>
<dbReference type="KEGG" id="sps:SPs0276"/>
<dbReference type="HOGENOM" id="CLU_059546_1_0_9"/>
<dbReference type="GO" id="GO:0005737">
    <property type="term" value="C:cytoplasm"/>
    <property type="evidence" value="ECO:0007669"/>
    <property type="project" value="UniProtKB-SubCell"/>
</dbReference>
<dbReference type="GO" id="GO:0032299">
    <property type="term" value="C:ribonuclease H2 complex"/>
    <property type="evidence" value="ECO:0007669"/>
    <property type="project" value="TreeGrafter"/>
</dbReference>
<dbReference type="GO" id="GO:0000287">
    <property type="term" value="F:magnesium ion binding"/>
    <property type="evidence" value="ECO:0007669"/>
    <property type="project" value="UniProtKB-UniRule"/>
</dbReference>
<dbReference type="GO" id="GO:0003723">
    <property type="term" value="F:RNA binding"/>
    <property type="evidence" value="ECO:0007669"/>
    <property type="project" value="InterPro"/>
</dbReference>
<dbReference type="GO" id="GO:0004523">
    <property type="term" value="F:RNA-DNA hybrid ribonuclease activity"/>
    <property type="evidence" value="ECO:0007669"/>
    <property type="project" value="UniProtKB-UniRule"/>
</dbReference>
<dbReference type="GO" id="GO:0043137">
    <property type="term" value="P:DNA replication, removal of RNA primer"/>
    <property type="evidence" value="ECO:0007669"/>
    <property type="project" value="TreeGrafter"/>
</dbReference>
<dbReference type="GO" id="GO:0006298">
    <property type="term" value="P:mismatch repair"/>
    <property type="evidence" value="ECO:0007669"/>
    <property type="project" value="TreeGrafter"/>
</dbReference>
<dbReference type="CDD" id="cd06590">
    <property type="entry name" value="RNase_HII_bacteria_HIII_like"/>
    <property type="match status" value="1"/>
</dbReference>
<dbReference type="CDD" id="cd14796">
    <property type="entry name" value="RNAse_HIII_N"/>
    <property type="match status" value="1"/>
</dbReference>
<dbReference type="FunFam" id="3.30.420.10:FF:000047">
    <property type="entry name" value="Ribonuclease HIII"/>
    <property type="match status" value="1"/>
</dbReference>
<dbReference type="Gene3D" id="3.30.420.10">
    <property type="entry name" value="Ribonuclease H-like superfamily/Ribonuclease H"/>
    <property type="match status" value="1"/>
</dbReference>
<dbReference type="Gene3D" id="3.30.310.10">
    <property type="entry name" value="TATA-Binding Protein"/>
    <property type="match status" value="1"/>
</dbReference>
<dbReference type="HAMAP" id="MF_00053">
    <property type="entry name" value="RNase_HIII"/>
    <property type="match status" value="1"/>
</dbReference>
<dbReference type="InterPro" id="IPR001352">
    <property type="entry name" value="RNase_HII/HIII"/>
</dbReference>
<dbReference type="InterPro" id="IPR024567">
    <property type="entry name" value="RNase_HII/HIII_dom"/>
</dbReference>
<dbReference type="InterPro" id="IPR004641">
    <property type="entry name" value="RNase_HIII"/>
</dbReference>
<dbReference type="InterPro" id="IPR024568">
    <property type="entry name" value="RNase_HIII_N"/>
</dbReference>
<dbReference type="InterPro" id="IPR012337">
    <property type="entry name" value="RNaseH-like_sf"/>
</dbReference>
<dbReference type="InterPro" id="IPR036397">
    <property type="entry name" value="RNaseH_sf"/>
</dbReference>
<dbReference type="InterPro" id="IPR012295">
    <property type="entry name" value="TBP_dom_sf"/>
</dbReference>
<dbReference type="NCBIfam" id="TIGR00716">
    <property type="entry name" value="rnhC"/>
    <property type="match status" value="1"/>
</dbReference>
<dbReference type="PANTHER" id="PTHR10954:SF23">
    <property type="entry name" value="RIBONUCLEASE"/>
    <property type="match status" value="1"/>
</dbReference>
<dbReference type="PANTHER" id="PTHR10954">
    <property type="entry name" value="RIBONUCLEASE H2 SUBUNIT A"/>
    <property type="match status" value="1"/>
</dbReference>
<dbReference type="Pfam" id="PF11858">
    <property type="entry name" value="DUF3378"/>
    <property type="match status" value="1"/>
</dbReference>
<dbReference type="Pfam" id="PF01351">
    <property type="entry name" value="RNase_HII"/>
    <property type="match status" value="1"/>
</dbReference>
<dbReference type="PIRSF" id="PIRSF037748">
    <property type="entry name" value="RnhC"/>
    <property type="match status" value="1"/>
</dbReference>
<dbReference type="SUPFAM" id="SSF53098">
    <property type="entry name" value="Ribonuclease H-like"/>
    <property type="match status" value="1"/>
</dbReference>
<dbReference type="PROSITE" id="PS51975">
    <property type="entry name" value="RNASE_H_2"/>
    <property type="match status" value="1"/>
</dbReference>
<reference key="1">
    <citation type="journal article" date="2003" name="Genome Res.">
        <title>Genome sequence of an M3 strain of Streptococcus pyogenes reveals a large-scale genomic rearrangement in invasive strains and new insights into phage evolution.</title>
        <authorList>
            <person name="Nakagawa I."/>
            <person name="Kurokawa K."/>
            <person name="Yamashita A."/>
            <person name="Nakata M."/>
            <person name="Tomiyasu Y."/>
            <person name="Okahashi N."/>
            <person name="Kawabata S."/>
            <person name="Yamazaki K."/>
            <person name="Shiba T."/>
            <person name="Yasunaga T."/>
            <person name="Hayashi H."/>
            <person name="Hattori M."/>
            <person name="Hamada S."/>
        </authorList>
    </citation>
    <scope>NUCLEOTIDE SEQUENCE [LARGE SCALE GENOMIC DNA]</scope>
    <source>
        <strain>SSI-1</strain>
    </source>
</reference>
<accession>P0DF19</accession>
<accession>Q8K5Y5</accession>
<comment type="function">
    <text evidence="1">Endonuclease that specifically degrades the RNA of RNA-DNA hybrids.</text>
</comment>
<comment type="catalytic activity">
    <reaction evidence="1">
        <text>Endonucleolytic cleavage to 5'-phosphomonoester.</text>
        <dbReference type="EC" id="3.1.26.4"/>
    </reaction>
</comment>
<comment type="cofactor">
    <cofactor evidence="1">
        <name>Mn(2+)</name>
        <dbReference type="ChEBI" id="CHEBI:29035"/>
    </cofactor>
    <cofactor evidence="1">
        <name>Mg(2+)</name>
        <dbReference type="ChEBI" id="CHEBI:18420"/>
    </cofactor>
    <text evidence="1">Manganese or magnesium. Binds 1 divalent metal ion per monomer in the absence of substrate. May bind a second metal ion after substrate binding.</text>
</comment>
<comment type="subcellular location">
    <subcellularLocation>
        <location evidence="1">Cytoplasm</location>
    </subcellularLocation>
</comment>
<comment type="similarity">
    <text evidence="1">Belongs to the RNase HII family. RnhC subfamily.</text>
</comment>
<keyword id="KW-0963">Cytoplasm</keyword>
<keyword id="KW-0255">Endonuclease</keyword>
<keyword id="KW-0378">Hydrolase</keyword>
<keyword id="KW-0460">Magnesium</keyword>
<keyword id="KW-0479">Metal-binding</keyword>
<keyword id="KW-0540">Nuclease</keyword>
<gene>
    <name evidence="1" type="primary">rnhC</name>
    <name type="ordered locus">SPs0276</name>
</gene>
<name>RNH3_STRPQ</name>
<organism>
    <name type="scientific">Streptococcus pyogenes serotype M3 (strain SSI-1)</name>
    <dbReference type="NCBI Taxonomy" id="193567"/>
    <lineage>
        <taxon>Bacteria</taxon>
        <taxon>Bacillati</taxon>
        <taxon>Bacillota</taxon>
        <taxon>Bacilli</taxon>
        <taxon>Lactobacillales</taxon>
        <taxon>Streptococcaceae</taxon>
        <taxon>Streptococcus</taxon>
    </lineage>
</organism>